<dbReference type="EC" id="3.1.-.-"/>
<dbReference type="EMBL" id="AK029527">
    <property type="protein sequence ID" value="BAC26496.1"/>
    <property type="status" value="ALT_FRAME"/>
    <property type="molecule type" value="mRNA"/>
</dbReference>
<dbReference type="EMBL" id="AK161500">
    <property type="protein sequence ID" value="BAE36426.1"/>
    <property type="molecule type" value="mRNA"/>
</dbReference>
<dbReference type="CCDS" id="CCDS52318.1"/>
<dbReference type="RefSeq" id="NP_808364.2">
    <property type="nucleotide sequence ID" value="NM_177696.3"/>
</dbReference>
<dbReference type="SMR" id="Q3TT99"/>
<dbReference type="FunCoup" id="Q3TT99">
    <property type="interactions" value="325"/>
</dbReference>
<dbReference type="STRING" id="10090.ENSMUSP00000036772"/>
<dbReference type="GlyCosmos" id="Q3TT99">
    <property type="glycosylation" value="4 sites, No reported glycans"/>
</dbReference>
<dbReference type="GlyGen" id="Q3TT99">
    <property type="glycosylation" value="5 sites"/>
</dbReference>
<dbReference type="PhosphoSitePlus" id="Q3TT99"/>
<dbReference type="SwissPalm" id="Q3TT99"/>
<dbReference type="PaxDb" id="10090-ENSMUSP00000036772"/>
<dbReference type="ProteomicsDB" id="265741"/>
<dbReference type="DNASU" id="233537"/>
<dbReference type="Ensembl" id="ENSMUST00000041860.13">
    <property type="protein sequence ID" value="ENSMUSP00000036772.7"/>
    <property type="gene ID" value="ENSMUSG00000035582.14"/>
</dbReference>
<dbReference type="Ensembl" id="ENSMUST00000170049.2">
    <property type="protein sequence ID" value="ENSMUSP00000131960.2"/>
    <property type="gene ID" value="ENSMUSG00000035582.14"/>
</dbReference>
<dbReference type="GeneID" id="233537"/>
<dbReference type="KEGG" id="mmu:233537"/>
<dbReference type="UCSC" id="uc012fpl.1">
    <property type="organism name" value="mouse"/>
</dbReference>
<dbReference type="AGR" id="MGI:3606573"/>
<dbReference type="CTD" id="220032"/>
<dbReference type="MGI" id="MGI:3606573">
    <property type="gene designation" value="Gdpd4"/>
</dbReference>
<dbReference type="VEuPathDB" id="HostDB:ENSMUSG00000035582"/>
<dbReference type="eggNOG" id="KOG2258">
    <property type="taxonomic scope" value="Eukaryota"/>
</dbReference>
<dbReference type="GeneTree" id="ENSGT00940000156251"/>
<dbReference type="HOGENOM" id="CLU_024259_2_0_1"/>
<dbReference type="InParanoid" id="Q3TT99"/>
<dbReference type="OMA" id="HDRRYVR"/>
<dbReference type="OrthoDB" id="1058301at2759"/>
<dbReference type="PhylomeDB" id="Q3TT99"/>
<dbReference type="TreeFam" id="TF313692"/>
<dbReference type="BioGRID-ORCS" id="233537">
    <property type="hits" value="1 hit in 79 CRISPR screens"/>
</dbReference>
<dbReference type="ChiTaRS" id="Gdpd4">
    <property type="organism name" value="mouse"/>
</dbReference>
<dbReference type="PRO" id="PR:Q3TT99"/>
<dbReference type="Proteomes" id="UP000000589">
    <property type="component" value="Chromosome 7"/>
</dbReference>
<dbReference type="RNAct" id="Q3TT99">
    <property type="molecule type" value="protein"/>
</dbReference>
<dbReference type="Bgee" id="ENSMUSG00000035582">
    <property type="expression patterns" value="Expressed in spermatocyte and 4 other cell types or tissues"/>
</dbReference>
<dbReference type="GO" id="GO:0005737">
    <property type="term" value="C:cytoplasm"/>
    <property type="evidence" value="ECO:0007669"/>
    <property type="project" value="UniProtKB-SubCell"/>
</dbReference>
<dbReference type="GO" id="GO:0016020">
    <property type="term" value="C:membrane"/>
    <property type="evidence" value="ECO:0007669"/>
    <property type="project" value="UniProtKB-SubCell"/>
</dbReference>
<dbReference type="GO" id="GO:0046872">
    <property type="term" value="F:metal ion binding"/>
    <property type="evidence" value="ECO:0007669"/>
    <property type="project" value="UniProtKB-KW"/>
</dbReference>
<dbReference type="GO" id="GO:0008081">
    <property type="term" value="F:phosphoric diester hydrolase activity"/>
    <property type="evidence" value="ECO:0007669"/>
    <property type="project" value="InterPro"/>
</dbReference>
<dbReference type="GO" id="GO:0006629">
    <property type="term" value="P:lipid metabolic process"/>
    <property type="evidence" value="ECO:0007669"/>
    <property type="project" value="InterPro"/>
</dbReference>
<dbReference type="Gene3D" id="3.20.20.190">
    <property type="entry name" value="Phosphatidylinositol (PI) phosphodiesterase"/>
    <property type="match status" value="1"/>
</dbReference>
<dbReference type="InterPro" id="IPR030395">
    <property type="entry name" value="GP_PDE_dom"/>
</dbReference>
<dbReference type="InterPro" id="IPR017946">
    <property type="entry name" value="PLC-like_Pdiesterase_TIM-brl"/>
</dbReference>
<dbReference type="PANTHER" id="PTHR23344:SF13">
    <property type="entry name" value="GLYCEROPHOSPHODIESTER PHOSPHODIESTERASE DOMAIN-CONTAINING PROTEIN 4"/>
    <property type="match status" value="1"/>
</dbReference>
<dbReference type="PANTHER" id="PTHR23344">
    <property type="entry name" value="GLYCEROPHOSPHORYL DIESTER PHOSPHODIESTERASE"/>
    <property type="match status" value="1"/>
</dbReference>
<dbReference type="Pfam" id="PF03009">
    <property type="entry name" value="GDPD"/>
    <property type="match status" value="1"/>
</dbReference>
<dbReference type="SUPFAM" id="SSF51695">
    <property type="entry name" value="PLC-like phosphodiesterases"/>
    <property type="match status" value="1"/>
</dbReference>
<dbReference type="PROSITE" id="PS51704">
    <property type="entry name" value="GP_PDE"/>
    <property type="match status" value="1"/>
</dbReference>
<feature type="chain" id="PRO_0000251940" description="Glycerophosphodiester phosphodiesterase domain-containing protein 4">
    <location>
        <begin position="1"/>
        <end position="632"/>
    </location>
</feature>
<feature type="topological domain" description="Cytoplasmic" evidence="1">
    <location>
        <begin position="1"/>
        <end position="64"/>
    </location>
</feature>
<feature type="transmembrane region" description="Helical" evidence="1">
    <location>
        <begin position="65"/>
        <end position="85"/>
    </location>
</feature>
<feature type="topological domain" description="Extracellular" evidence="1">
    <location>
        <begin position="86"/>
        <end position="114"/>
    </location>
</feature>
<feature type="transmembrane region" description="Helical" evidence="1">
    <location>
        <begin position="115"/>
        <end position="135"/>
    </location>
</feature>
<feature type="topological domain" description="Cytoplasmic" evidence="1">
    <location>
        <begin position="136"/>
        <end position="147"/>
    </location>
</feature>
<feature type="transmembrane region" description="Helical" evidence="1">
    <location>
        <begin position="148"/>
        <end position="168"/>
    </location>
</feature>
<feature type="topological domain" description="Extracellular" evidence="1">
    <location>
        <begin position="169"/>
        <end position="180"/>
    </location>
</feature>
<feature type="transmembrane region" description="Helical" evidence="1">
    <location>
        <begin position="181"/>
        <end position="201"/>
    </location>
</feature>
<feature type="topological domain" description="Cytoplasmic" evidence="1">
    <location>
        <begin position="202"/>
        <end position="240"/>
    </location>
</feature>
<feature type="transmembrane region" description="Helical" evidence="1">
    <location>
        <begin position="241"/>
        <end position="261"/>
    </location>
</feature>
<feature type="topological domain" description="Extracellular" evidence="1">
    <location>
        <begin position="262"/>
        <end position="542"/>
    </location>
</feature>
<feature type="transmembrane region" description="Helical" evidence="1">
    <location>
        <begin position="543"/>
        <end position="563"/>
    </location>
</feature>
<feature type="topological domain" description="Cytoplasmic" evidence="1">
    <location>
        <begin position="564"/>
        <end position="632"/>
    </location>
</feature>
<feature type="domain" description="GP-PDE">
    <location>
        <begin position="276"/>
        <end position="533"/>
    </location>
</feature>
<feature type="region of interest" description="Disordered" evidence="2">
    <location>
        <begin position="596"/>
        <end position="632"/>
    </location>
</feature>
<feature type="compositionally biased region" description="Basic and acidic residues" evidence="2">
    <location>
        <begin position="623"/>
        <end position="632"/>
    </location>
</feature>
<feature type="binding site" evidence="1">
    <location>
        <position position="308"/>
    </location>
    <ligand>
        <name>a divalent metal cation</name>
        <dbReference type="ChEBI" id="CHEBI:60240"/>
    </ligand>
</feature>
<feature type="binding site" evidence="1">
    <location>
        <position position="310"/>
    </location>
    <ligand>
        <name>a divalent metal cation</name>
        <dbReference type="ChEBI" id="CHEBI:60240"/>
    </ligand>
</feature>
<feature type="binding site" evidence="1">
    <location>
        <position position="323"/>
    </location>
    <ligand>
        <name>a divalent metal cation</name>
        <dbReference type="ChEBI" id="CHEBI:60240"/>
    </ligand>
</feature>
<feature type="glycosylation site" description="N-linked (GlcNAc...) asparagine" evidence="1">
    <location>
        <position position="343"/>
    </location>
</feature>
<feature type="glycosylation site" description="N-linked (GlcNAc...) asparagine" evidence="1">
    <location>
        <position position="349"/>
    </location>
</feature>
<feature type="glycosylation site" description="N-linked (GlcNAc...) asparagine" evidence="1">
    <location>
        <position position="384"/>
    </location>
</feature>
<feature type="glycosylation site" description="N-linked (GlcNAc...) asparagine" evidence="1">
    <location>
        <position position="473"/>
    </location>
</feature>
<feature type="sequence conflict" description="In Ref. 1; BAC26496." evidence="4" ref="1">
    <original>S</original>
    <variation>T</variation>
    <location>
        <position position="165"/>
    </location>
</feature>
<gene>
    <name type="primary">Gdpd4</name>
    <name type="synonym">Gde6</name>
</gene>
<comment type="subcellular location">
    <subcellularLocation>
        <location evidence="3">Cytoplasm</location>
    </subcellularLocation>
    <subcellularLocation>
        <location evidence="4">Membrane</location>
        <topology evidence="4">Multi-pass membrane protein</topology>
    </subcellularLocation>
</comment>
<comment type="tissue specificity">
    <text evidence="3">Detected in testis, in particular in spermatocytes.</text>
</comment>
<comment type="similarity">
    <text evidence="4">Belongs to the glycerophosphoryl diester phosphodiesterase family.</text>
</comment>
<comment type="sequence caution" evidence="4">
    <conflict type="frameshift">
        <sequence resource="EMBL-CDS" id="BAC26496"/>
    </conflict>
</comment>
<reference key="1">
    <citation type="journal article" date="2005" name="Science">
        <title>The transcriptional landscape of the mammalian genome.</title>
        <authorList>
            <person name="Carninci P."/>
            <person name="Kasukawa T."/>
            <person name="Katayama S."/>
            <person name="Gough J."/>
            <person name="Frith M.C."/>
            <person name="Maeda N."/>
            <person name="Oyama R."/>
            <person name="Ravasi T."/>
            <person name="Lenhard B."/>
            <person name="Wells C."/>
            <person name="Kodzius R."/>
            <person name="Shimokawa K."/>
            <person name="Bajic V.B."/>
            <person name="Brenner S.E."/>
            <person name="Batalov S."/>
            <person name="Forrest A.R."/>
            <person name="Zavolan M."/>
            <person name="Davis M.J."/>
            <person name="Wilming L.G."/>
            <person name="Aidinis V."/>
            <person name="Allen J.E."/>
            <person name="Ambesi-Impiombato A."/>
            <person name="Apweiler R."/>
            <person name="Aturaliya R.N."/>
            <person name="Bailey T.L."/>
            <person name="Bansal M."/>
            <person name="Baxter L."/>
            <person name="Beisel K.W."/>
            <person name="Bersano T."/>
            <person name="Bono H."/>
            <person name="Chalk A.M."/>
            <person name="Chiu K.P."/>
            <person name="Choudhary V."/>
            <person name="Christoffels A."/>
            <person name="Clutterbuck D.R."/>
            <person name="Crowe M.L."/>
            <person name="Dalla E."/>
            <person name="Dalrymple B.P."/>
            <person name="de Bono B."/>
            <person name="Della Gatta G."/>
            <person name="di Bernardo D."/>
            <person name="Down T."/>
            <person name="Engstrom P."/>
            <person name="Fagiolini M."/>
            <person name="Faulkner G."/>
            <person name="Fletcher C.F."/>
            <person name="Fukushima T."/>
            <person name="Furuno M."/>
            <person name="Futaki S."/>
            <person name="Gariboldi M."/>
            <person name="Georgii-Hemming P."/>
            <person name="Gingeras T.R."/>
            <person name="Gojobori T."/>
            <person name="Green R.E."/>
            <person name="Gustincich S."/>
            <person name="Harbers M."/>
            <person name="Hayashi Y."/>
            <person name="Hensch T.K."/>
            <person name="Hirokawa N."/>
            <person name="Hill D."/>
            <person name="Huminiecki L."/>
            <person name="Iacono M."/>
            <person name="Ikeo K."/>
            <person name="Iwama A."/>
            <person name="Ishikawa T."/>
            <person name="Jakt M."/>
            <person name="Kanapin A."/>
            <person name="Katoh M."/>
            <person name="Kawasawa Y."/>
            <person name="Kelso J."/>
            <person name="Kitamura H."/>
            <person name="Kitano H."/>
            <person name="Kollias G."/>
            <person name="Krishnan S.P."/>
            <person name="Kruger A."/>
            <person name="Kummerfeld S.K."/>
            <person name="Kurochkin I.V."/>
            <person name="Lareau L.F."/>
            <person name="Lazarevic D."/>
            <person name="Lipovich L."/>
            <person name="Liu J."/>
            <person name="Liuni S."/>
            <person name="McWilliam S."/>
            <person name="Madan Babu M."/>
            <person name="Madera M."/>
            <person name="Marchionni L."/>
            <person name="Matsuda H."/>
            <person name="Matsuzawa S."/>
            <person name="Miki H."/>
            <person name="Mignone F."/>
            <person name="Miyake S."/>
            <person name="Morris K."/>
            <person name="Mottagui-Tabar S."/>
            <person name="Mulder N."/>
            <person name="Nakano N."/>
            <person name="Nakauchi H."/>
            <person name="Ng P."/>
            <person name="Nilsson R."/>
            <person name="Nishiguchi S."/>
            <person name="Nishikawa S."/>
            <person name="Nori F."/>
            <person name="Ohara O."/>
            <person name="Okazaki Y."/>
            <person name="Orlando V."/>
            <person name="Pang K.C."/>
            <person name="Pavan W.J."/>
            <person name="Pavesi G."/>
            <person name="Pesole G."/>
            <person name="Petrovsky N."/>
            <person name="Piazza S."/>
            <person name="Reed J."/>
            <person name="Reid J.F."/>
            <person name="Ring B.Z."/>
            <person name="Ringwald M."/>
            <person name="Rost B."/>
            <person name="Ruan Y."/>
            <person name="Salzberg S.L."/>
            <person name="Sandelin A."/>
            <person name="Schneider C."/>
            <person name="Schoenbach C."/>
            <person name="Sekiguchi K."/>
            <person name="Semple C.A."/>
            <person name="Seno S."/>
            <person name="Sessa L."/>
            <person name="Sheng Y."/>
            <person name="Shibata Y."/>
            <person name="Shimada H."/>
            <person name="Shimada K."/>
            <person name="Silva D."/>
            <person name="Sinclair B."/>
            <person name="Sperling S."/>
            <person name="Stupka E."/>
            <person name="Sugiura K."/>
            <person name="Sultana R."/>
            <person name="Takenaka Y."/>
            <person name="Taki K."/>
            <person name="Tammoja K."/>
            <person name="Tan S.L."/>
            <person name="Tang S."/>
            <person name="Taylor M.S."/>
            <person name="Tegner J."/>
            <person name="Teichmann S.A."/>
            <person name="Ueda H.R."/>
            <person name="van Nimwegen E."/>
            <person name="Verardo R."/>
            <person name="Wei C.L."/>
            <person name="Yagi K."/>
            <person name="Yamanishi H."/>
            <person name="Zabarovsky E."/>
            <person name="Zhu S."/>
            <person name="Zimmer A."/>
            <person name="Hide W."/>
            <person name="Bult C."/>
            <person name="Grimmond S.M."/>
            <person name="Teasdale R.D."/>
            <person name="Liu E.T."/>
            <person name="Brusic V."/>
            <person name="Quackenbush J."/>
            <person name="Wahlestedt C."/>
            <person name="Mattick J.S."/>
            <person name="Hume D.A."/>
            <person name="Kai C."/>
            <person name="Sasaki D."/>
            <person name="Tomaru Y."/>
            <person name="Fukuda S."/>
            <person name="Kanamori-Katayama M."/>
            <person name="Suzuki M."/>
            <person name="Aoki J."/>
            <person name="Arakawa T."/>
            <person name="Iida J."/>
            <person name="Imamura K."/>
            <person name="Itoh M."/>
            <person name="Kato T."/>
            <person name="Kawaji H."/>
            <person name="Kawagashira N."/>
            <person name="Kawashima T."/>
            <person name="Kojima M."/>
            <person name="Kondo S."/>
            <person name="Konno H."/>
            <person name="Nakano K."/>
            <person name="Ninomiya N."/>
            <person name="Nishio T."/>
            <person name="Okada M."/>
            <person name="Plessy C."/>
            <person name="Shibata K."/>
            <person name="Shiraki T."/>
            <person name="Suzuki S."/>
            <person name="Tagami M."/>
            <person name="Waki K."/>
            <person name="Watahiki A."/>
            <person name="Okamura-Oho Y."/>
            <person name="Suzuki H."/>
            <person name="Kawai J."/>
            <person name="Hayashizaki Y."/>
        </authorList>
    </citation>
    <scope>NUCLEOTIDE SEQUENCE [LARGE SCALE MRNA]</scope>
    <source>
        <strain>C57BL/6J</strain>
        <tissue>Testis</tissue>
    </source>
</reference>
<reference key="2">
    <citation type="journal article" date="2004" name="Gene">
        <title>Isolation and characterization of two serpentine membrane proteins containing glycerophosphodiester phosphodiesterase, GDE2 and GDE6.</title>
        <authorList>
            <person name="Nogusa Y."/>
            <person name="Fujioka Y."/>
            <person name="Komatsu R."/>
            <person name="Kato N."/>
            <person name="Yanaka N."/>
        </authorList>
    </citation>
    <scope>SUBCELLULAR LOCATION</scope>
    <scope>TISSUE SPECIFICITY</scope>
</reference>
<organism>
    <name type="scientific">Mus musculus</name>
    <name type="common">Mouse</name>
    <dbReference type="NCBI Taxonomy" id="10090"/>
    <lineage>
        <taxon>Eukaryota</taxon>
        <taxon>Metazoa</taxon>
        <taxon>Chordata</taxon>
        <taxon>Craniata</taxon>
        <taxon>Vertebrata</taxon>
        <taxon>Euteleostomi</taxon>
        <taxon>Mammalia</taxon>
        <taxon>Eutheria</taxon>
        <taxon>Euarchontoglires</taxon>
        <taxon>Glires</taxon>
        <taxon>Rodentia</taxon>
        <taxon>Myomorpha</taxon>
        <taxon>Muroidea</taxon>
        <taxon>Muridae</taxon>
        <taxon>Murinae</taxon>
        <taxon>Mus</taxon>
        <taxon>Mus</taxon>
    </lineage>
</organism>
<accession>Q3TT99</accession>
<accession>Q8BI25</accession>
<evidence type="ECO:0000255" key="1"/>
<evidence type="ECO:0000256" key="2">
    <source>
        <dbReference type="SAM" id="MobiDB-lite"/>
    </source>
</evidence>
<evidence type="ECO:0000269" key="3">
    <source>
    </source>
</evidence>
<evidence type="ECO:0000305" key="4"/>
<sequence length="632" mass="73220">MEETQDSSSSKPKNTDENFSLWIEQYFNHKCCITFLTGCYSCQWQYREWEKTELGSCCCSRKEQFFYMCLVIAFILSVLFLFVWVETSNEYNGFDWVVYLGTGCWFFWSILVLSAAGIMVAYTTLLLLLGFLLLWERIELNLHTSHKVFICLVIVLCSFLLAVLSHFWKDKWLIAGLSLQIFAPFVHLSLITVMIIISWPLSICVARLESEVKVRRYRMADYEQEIQERCNVFQRLRALQIAAGLSFLIILLCLYLMPLGIYSPCILKKENLGPKPTLFGHRGAPMLAPENTMMSFEKAVELDVSGLETDIYLSFDSVPFLMHDYDLTRTTNIKEVLPSAAGNHTSNFNWTFLSTLNAGKWFLKHKPFFGMKPLSEADKRRAGNQSIPQLSELLALAKREQKIVIFDLFGPRPGHPLRNTFVRRVVKVILDSKIEQRLIFWLPGFDRDYVRFMAPGFQHVGRLWSIKDLTKHNITIINVDYKRLFYAGLRDYKEAKIYIHVYVINEPWLFSLAWCSSINSVTTDNIELLNQLSRPLFFMTPGFYMFMWLFLDIASAVIIGFVFCYNWIKEIKRERWLEAAASSGLLHSETITDITENNDASQQKPEVAPTSANLAPENMIELQKTEPKTENL</sequence>
<keyword id="KW-0963">Cytoplasm</keyword>
<keyword id="KW-0325">Glycoprotein</keyword>
<keyword id="KW-0378">Hydrolase</keyword>
<keyword id="KW-0472">Membrane</keyword>
<keyword id="KW-0479">Metal-binding</keyword>
<keyword id="KW-1185">Reference proteome</keyword>
<keyword id="KW-0812">Transmembrane</keyword>
<keyword id="KW-1133">Transmembrane helix</keyword>
<proteinExistence type="evidence at transcript level"/>
<name>GDPD4_MOUSE</name>
<protein>
    <recommendedName>
        <fullName>Glycerophosphodiester phosphodiesterase domain-containing protein 4</fullName>
        <ecNumber>3.1.-.-</ecNumber>
    </recommendedName>
    <alternativeName>
        <fullName>Glycerophosphodiester phosphodiesterase 6</fullName>
    </alternativeName>
</protein>